<proteinExistence type="inferred from homology"/>
<reference key="1">
    <citation type="submission" date="2003-03" db="EMBL/GenBank/DDBJ databases">
        <authorList>
            <consortium name="NIH - Zebrafish Gene Collection (ZGC) project"/>
        </authorList>
    </citation>
    <scope>NUCLEOTIDE SEQUENCE [LARGE SCALE MRNA]</scope>
    <source>
        <strain>SJD</strain>
    </source>
</reference>
<dbReference type="EMBL" id="BC049062">
    <property type="protein sequence ID" value="AAH49062.1"/>
    <property type="molecule type" value="mRNA"/>
</dbReference>
<dbReference type="RefSeq" id="NP_957298.1">
    <property type="nucleotide sequence ID" value="NM_201004.2"/>
</dbReference>
<dbReference type="SMR" id="Q7ZUG0"/>
<dbReference type="FunCoup" id="Q7ZUG0">
    <property type="interactions" value="2016"/>
</dbReference>
<dbReference type="STRING" id="7955.ENSDARP00000050295"/>
<dbReference type="PaxDb" id="7955-ENSDARP00000050295"/>
<dbReference type="Ensembl" id="ENSDART00000050296">
    <property type="protein sequence ID" value="ENSDARP00000050295"/>
    <property type="gene ID" value="ENSDARG00000033175"/>
</dbReference>
<dbReference type="GeneID" id="393979"/>
<dbReference type="KEGG" id="dre:393979"/>
<dbReference type="AGR" id="ZFIN:ZDB-GENE-040426-1112"/>
<dbReference type="CTD" id="6635"/>
<dbReference type="ZFIN" id="ZDB-GENE-040426-1112">
    <property type="gene designation" value="snrpe"/>
</dbReference>
<dbReference type="eggNOG" id="KOG1774">
    <property type="taxonomic scope" value="Eukaryota"/>
</dbReference>
<dbReference type="HOGENOM" id="CLU_125186_1_0_1"/>
<dbReference type="InParanoid" id="Q7ZUG0"/>
<dbReference type="OMA" id="VPPINCI"/>
<dbReference type="OrthoDB" id="25620at2759"/>
<dbReference type="PhylomeDB" id="Q7ZUG0"/>
<dbReference type="TreeFam" id="TF314419"/>
<dbReference type="Reactome" id="R-DRE-72163">
    <property type="pathway name" value="mRNA Splicing - Major Pathway"/>
</dbReference>
<dbReference type="PRO" id="PR:Q7ZUG0"/>
<dbReference type="Proteomes" id="UP000000437">
    <property type="component" value="Chromosome 11"/>
</dbReference>
<dbReference type="Bgee" id="ENSDARG00000033175">
    <property type="expression patterns" value="Expressed in tail bud paraxial mesoderm and 28 other cell types or tissues"/>
</dbReference>
<dbReference type="ExpressionAtlas" id="Q7ZUG0">
    <property type="expression patterns" value="baseline and differential"/>
</dbReference>
<dbReference type="GO" id="GO:0005829">
    <property type="term" value="C:cytosol"/>
    <property type="evidence" value="ECO:0000250"/>
    <property type="project" value="UniProtKB"/>
</dbReference>
<dbReference type="GO" id="GO:0034709">
    <property type="term" value="C:methylosome"/>
    <property type="evidence" value="ECO:0000250"/>
    <property type="project" value="UniProtKB"/>
</dbReference>
<dbReference type="GO" id="GO:0005634">
    <property type="term" value="C:nucleus"/>
    <property type="evidence" value="ECO:0000250"/>
    <property type="project" value="UniProtKB"/>
</dbReference>
<dbReference type="GO" id="GO:0034715">
    <property type="term" value="C:pICln-Sm protein complex"/>
    <property type="evidence" value="ECO:0000250"/>
    <property type="project" value="UniProtKB"/>
</dbReference>
<dbReference type="GO" id="GO:0071011">
    <property type="term" value="C:precatalytic spliceosome"/>
    <property type="evidence" value="ECO:0000318"/>
    <property type="project" value="GO_Central"/>
</dbReference>
<dbReference type="GO" id="GO:0034719">
    <property type="term" value="C:SMN-Sm protein complex"/>
    <property type="evidence" value="ECO:0000250"/>
    <property type="project" value="UniProtKB"/>
</dbReference>
<dbReference type="GO" id="GO:0005685">
    <property type="term" value="C:U1 snRNP"/>
    <property type="evidence" value="ECO:0000250"/>
    <property type="project" value="UniProtKB"/>
</dbReference>
<dbReference type="GO" id="GO:0005686">
    <property type="term" value="C:U2 snRNP"/>
    <property type="evidence" value="ECO:0000318"/>
    <property type="project" value="GO_Central"/>
</dbReference>
<dbReference type="GO" id="GO:0071007">
    <property type="term" value="C:U2-type catalytic step 2 spliceosome"/>
    <property type="evidence" value="ECO:0000250"/>
    <property type="project" value="UniProtKB"/>
</dbReference>
<dbReference type="GO" id="GO:0071005">
    <property type="term" value="C:U2-type precatalytic spliceosome"/>
    <property type="evidence" value="ECO:0000250"/>
    <property type="project" value="UniProtKB"/>
</dbReference>
<dbReference type="GO" id="GO:0005684">
    <property type="term" value="C:U2-type spliceosomal complex"/>
    <property type="evidence" value="ECO:0000250"/>
    <property type="project" value="UniProtKB"/>
</dbReference>
<dbReference type="GO" id="GO:0005687">
    <property type="term" value="C:U4 snRNP"/>
    <property type="evidence" value="ECO:0000250"/>
    <property type="project" value="UniProtKB"/>
</dbReference>
<dbReference type="GO" id="GO:0046540">
    <property type="term" value="C:U4/U6 x U5 tri-snRNP complex"/>
    <property type="evidence" value="ECO:0000250"/>
    <property type="project" value="UniProtKB"/>
</dbReference>
<dbReference type="GO" id="GO:0005682">
    <property type="term" value="C:U5 snRNP"/>
    <property type="evidence" value="ECO:0000318"/>
    <property type="project" value="GO_Central"/>
</dbReference>
<dbReference type="GO" id="GO:0003723">
    <property type="term" value="F:RNA binding"/>
    <property type="evidence" value="ECO:0007669"/>
    <property type="project" value="UniProtKB-KW"/>
</dbReference>
<dbReference type="GO" id="GO:0000398">
    <property type="term" value="P:mRNA splicing, via spliceosome"/>
    <property type="evidence" value="ECO:0000250"/>
    <property type="project" value="UniProtKB"/>
</dbReference>
<dbReference type="GO" id="GO:0000387">
    <property type="term" value="P:spliceosomal snRNP assembly"/>
    <property type="evidence" value="ECO:0000250"/>
    <property type="project" value="UniProtKB"/>
</dbReference>
<dbReference type="CDD" id="cd01718">
    <property type="entry name" value="Sm_E"/>
    <property type="match status" value="1"/>
</dbReference>
<dbReference type="FunFam" id="2.30.30.100:FF:000059">
    <property type="entry name" value="Small nuclear ribonucleoprotein E"/>
    <property type="match status" value="1"/>
</dbReference>
<dbReference type="Gene3D" id="2.30.30.100">
    <property type="match status" value="1"/>
</dbReference>
<dbReference type="InterPro" id="IPR010920">
    <property type="entry name" value="LSM_dom_sf"/>
</dbReference>
<dbReference type="InterPro" id="IPR047575">
    <property type="entry name" value="Sm"/>
</dbReference>
<dbReference type="InterPro" id="IPR001163">
    <property type="entry name" value="Sm_dom_euk/arc"/>
</dbReference>
<dbReference type="InterPro" id="IPR027078">
    <property type="entry name" value="snRNP-E"/>
</dbReference>
<dbReference type="PANTHER" id="PTHR11193">
    <property type="entry name" value="SMALL NUCLEAR RIBONUCLEOPROTEIN E"/>
    <property type="match status" value="1"/>
</dbReference>
<dbReference type="Pfam" id="PF01423">
    <property type="entry name" value="LSM"/>
    <property type="match status" value="1"/>
</dbReference>
<dbReference type="SMART" id="SM00651">
    <property type="entry name" value="Sm"/>
    <property type="match status" value="1"/>
</dbReference>
<dbReference type="SUPFAM" id="SSF50182">
    <property type="entry name" value="Sm-like ribonucleoproteins"/>
    <property type="match status" value="1"/>
</dbReference>
<dbReference type="PROSITE" id="PS52002">
    <property type="entry name" value="SM"/>
    <property type="match status" value="1"/>
</dbReference>
<organism>
    <name type="scientific">Danio rerio</name>
    <name type="common">Zebrafish</name>
    <name type="synonym">Brachydanio rerio</name>
    <dbReference type="NCBI Taxonomy" id="7955"/>
    <lineage>
        <taxon>Eukaryota</taxon>
        <taxon>Metazoa</taxon>
        <taxon>Chordata</taxon>
        <taxon>Craniata</taxon>
        <taxon>Vertebrata</taxon>
        <taxon>Euteleostomi</taxon>
        <taxon>Actinopterygii</taxon>
        <taxon>Neopterygii</taxon>
        <taxon>Teleostei</taxon>
        <taxon>Ostariophysi</taxon>
        <taxon>Cypriniformes</taxon>
        <taxon>Danionidae</taxon>
        <taxon>Danioninae</taxon>
        <taxon>Danio</taxon>
    </lineage>
</organism>
<comment type="function">
    <text evidence="1">Plays a role in pre-mRNA splicing as a core component of the spliceosomal U1, U2, U4 and U5 small nuclear ribonucleoproteins (snRNPs), the building blocks of the spliceosome. Component of both the pre-catalytic spliceosome B complex and activated spliceosome C complexes. As a component of the minor spliceosome, involved in the splicing of U12-type introns in pre-mRNAs. As part of the U7 snRNP it is involved in histone 3'-end processing.</text>
</comment>
<comment type="subunit">
    <text evidence="1">Core component of the spliceosomal U1, U2, U4 and U5 small nuclear ribonucleoproteins (snRNPs), the building blocks of the spliceosome. Most spliceosomal snRNPs contain a common set of Sm proteins, snrpb, snrpd1, snrpd2, snrpd3, snrpe, snrpf and snrpg that assemble in a heptameric protein ring on the Sm site of the small nuclear RNA to form the core snRNP. Component of the U1 snRNP. The U1 snRNP is composed of the U1 snRNA and the 7 core Sm proteins snrpb, snrpd1, snrpd2, snrpd3, snrpe, snrpf and snrpg, and at least three U1 snRNP-specific proteins snrnp70/u1-70k, snrpa/u1-a and snrpc/u1-c. Component of the U4/U6-U5 tri-snRNP complex composed of the U4, U6 and U5 snRNAs and at least prpf3, prpf4, prpf6, prpf8, prpf31, snrnp200, txnl4a, snrnp40, snrpb, snrpd1, snrpd2, snrpd3, snrpe, snrpf, snrpg, ddx23, cd2bp2, ppih, snu13, eftud2, sart1 and usp39, plus lsm2, lsm3, lsm4, lsm5, lsm6, lsm7 and lsm8. Component of the U7 snRNP complex, or U7 Sm protein core complex, that is composed of the U7 snRNA and at least lsm10, lsm11, snrpb, snrpd3, snrpe, snrpf and snrpg; the complex does not contain snrpd1 and snrpd2. Component of the minor spliceosome, which splices U12-type introns. Part of the SMN-Sm complex that contains smn1, gemin2/sip1, ddx20/gemin3, gemin4, gemin5, gemin6, gemin7, gemin8, strap/unrip and the Sm proteins snrpb, snrpd1, snrpd2, snrpd3, snrpe, snrpf and snrpg; catalyzes core snRNPs assembly. Forms a 6S pICln-Sm complex composed of clns1a/pICln, snrpd1, snrpd2, snrpe, snrpf and snrpg; ring-like structure where clns1a/pICln mimics additional Sm proteins and which is unable to assemble into the core snRNP.</text>
</comment>
<comment type="subcellular location">
    <subcellularLocation>
        <location evidence="1">Cytoplasm</location>
        <location evidence="1">Cytosol</location>
    </subcellularLocation>
    <subcellularLocation>
        <location evidence="1">Nucleus</location>
    </subcellularLocation>
    <text evidence="1">SMN-mediated assembly into core snRNPs occurs in the cytosol before SMN-mediated transport to the nucleus to be included in spliceosomes.</text>
</comment>
<comment type="similarity">
    <text evidence="3">Belongs to the snRNP Sm proteins family.</text>
</comment>
<keyword id="KW-0963">Cytoplasm</keyword>
<keyword id="KW-0507">mRNA processing</keyword>
<keyword id="KW-0508">mRNA splicing</keyword>
<keyword id="KW-0539">Nucleus</keyword>
<keyword id="KW-1185">Reference proteome</keyword>
<keyword id="KW-0687">Ribonucleoprotein</keyword>
<keyword id="KW-0694">RNA-binding</keyword>
<keyword id="KW-0747">Spliceosome</keyword>
<accession>Q7ZUG0</accession>
<gene>
    <name type="primary">snrpe</name>
    <name type="ORF">zgc:56682</name>
</gene>
<sequence>MAYRGQGQKVQKVMVQPINLIFRYLQNRSRISVWLYEQVNMRIEGCIIGFDEYMNLVLDDAEEVHMKTKNRKPLGRIMLKGDNITLLQSVSN</sequence>
<feature type="chain" id="PRO_0000125532" description="Small nuclear ribonucleoprotein E">
    <location>
        <begin position="1"/>
        <end position="92"/>
    </location>
</feature>
<feature type="domain" description="Sm" evidence="2">
    <location>
        <begin position="18"/>
        <end position="92"/>
    </location>
</feature>
<name>RUXE_DANRE</name>
<protein>
    <recommendedName>
        <fullName>Small nuclear ribonucleoprotein E</fullName>
        <shortName>snRNP-E</shortName>
    </recommendedName>
    <alternativeName>
        <fullName>Sm protein E</fullName>
        <shortName>Sm-E</shortName>
        <shortName>SmE</shortName>
    </alternativeName>
</protein>
<evidence type="ECO:0000250" key="1">
    <source>
        <dbReference type="UniProtKB" id="P62304"/>
    </source>
</evidence>
<evidence type="ECO:0000255" key="2">
    <source>
        <dbReference type="PROSITE-ProRule" id="PRU01346"/>
    </source>
</evidence>
<evidence type="ECO:0000305" key="3"/>